<organism>
    <name type="scientific">Salmonella typhimurium (strain LT2 / SGSC1412 / ATCC 700720)</name>
    <dbReference type="NCBI Taxonomy" id="99287"/>
    <lineage>
        <taxon>Bacteria</taxon>
        <taxon>Pseudomonadati</taxon>
        <taxon>Pseudomonadota</taxon>
        <taxon>Gammaproteobacteria</taxon>
        <taxon>Enterobacterales</taxon>
        <taxon>Enterobacteriaceae</taxon>
        <taxon>Salmonella</taxon>
    </lineage>
</organism>
<proteinExistence type="evidence at protein level"/>
<reference key="1">
    <citation type="journal article" date="1999" name="Mol. Microbiol.">
        <title>Molecular and functional analysis indicates a mosaic structure of Salmonella pathogenicity island 2.</title>
        <authorList>
            <person name="Hensel M."/>
            <person name="Egelseer C."/>
            <person name="Nikolaus T."/>
        </authorList>
    </citation>
    <scope>NUCLEOTIDE SEQUENCE [GENOMIC DNA]</scope>
    <source>
        <strain>LT2</strain>
    </source>
</reference>
<reference key="2">
    <citation type="journal article" date="2001" name="J. Bacteriol.">
        <title>The alternative electron acceptor tetrathionate supports B12-dependent anaerobic growth of Salmonella enterica serovar typhimurium on ethanolamine or 1,2-propanediol.</title>
        <authorList>
            <person name="Price-Carter M."/>
            <person name="Tingey J."/>
            <person name="Bobik T.A."/>
            <person name="Roth J.R."/>
        </authorList>
    </citation>
    <scope>NUCLEOTIDE SEQUENCE [GENOMIC DNA]</scope>
    <scope>INDUCTION</scope>
    <source>
        <strain>LT2</strain>
    </source>
</reference>
<reference key="3">
    <citation type="journal article" date="2001" name="Nature">
        <title>Complete genome sequence of Salmonella enterica serovar Typhimurium LT2.</title>
        <authorList>
            <person name="McClelland M."/>
            <person name="Sanderson K.E."/>
            <person name="Spieth J."/>
            <person name="Clifton S.W."/>
            <person name="Latreille P."/>
            <person name="Courtney L."/>
            <person name="Porwollik S."/>
            <person name="Ali J."/>
            <person name="Dante M."/>
            <person name="Du F."/>
            <person name="Hou S."/>
            <person name="Layman D."/>
            <person name="Leonard S."/>
            <person name="Nguyen C."/>
            <person name="Scott K."/>
            <person name="Holmes A."/>
            <person name="Grewal N."/>
            <person name="Mulvaney E."/>
            <person name="Ryan E."/>
            <person name="Sun H."/>
            <person name="Florea L."/>
            <person name="Miller W."/>
            <person name="Stoneking T."/>
            <person name="Nhan M."/>
            <person name="Waterston R."/>
            <person name="Wilson R.K."/>
        </authorList>
    </citation>
    <scope>NUCLEOTIDE SEQUENCE [LARGE SCALE GENOMIC DNA]</scope>
    <source>
        <strain>LT2 / SGSC1412 / ATCC 700720</strain>
    </source>
</reference>
<reference key="4">
    <citation type="journal article" date="1999" name="Mol. Microbiol.">
        <title>The genetic basis of tetrathionate respiration in Salmonella typhimurium.</title>
        <authorList>
            <person name="Hensel M."/>
            <person name="Hinsley A.P."/>
            <person name="Nikolaus T."/>
            <person name="Sawers G."/>
            <person name="Berks B.C."/>
        </authorList>
    </citation>
    <scope>FUNCTION</scope>
    <scope>SUBUNIT</scope>
    <scope>SUBCELLULAR LOCATION</scope>
    <scope>INDUCTION</scope>
    <scope>DISRUPTION PHENOTYPE</scope>
    <source>
        <strain>LT2</strain>
    </source>
</reference>
<reference key="5">
    <citation type="journal article" date="2010" name="Nature">
        <title>Gut inflammation provides a respiratory electron acceptor for Salmonella.</title>
        <authorList>
            <person name="Winter S.E."/>
            <person name="Thiennimitr P."/>
            <person name="Winter M.G."/>
            <person name="Butler B.P."/>
            <person name="Huseby D.L."/>
            <person name="Crawford R.W."/>
            <person name="Russell J.M."/>
            <person name="Bevins C.L."/>
            <person name="Adams L.G."/>
            <person name="Tsolis R.M."/>
            <person name="Roth J.R."/>
            <person name="Baumler A.J."/>
        </authorList>
    </citation>
    <scope>FUNCTION IN VIRULENCE</scope>
</reference>
<name>TTRA_SALTY</name>
<protein>
    <recommendedName>
        <fullName>Tetrathionate reductase subunit A</fullName>
        <ecNumber>1.8.-.-</ecNumber>
    </recommendedName>
    <alternativeName>
        <fullName>Tetrathionate reductase molybdenum subunit</fullName>
    </alternativeName>
</protein>
<dbReference type="EC" id="1.8.-.-"/>
<dbReference type="EMBL" id="AJ224978">
    <property type="protein sequence ID" value="CAB37416.1"/>
    <property type="molecule type" value="Genomic_DNA"/>
</dbReference>
<dbReference type="EMBL" id="AF282268">
    <property type="protein sequence ID" value="AAG31759.1"/>
    <property type="molecule type" value="Genomic_DNA"/>
</dbReference>
<dbReference type="EMBL" id="AE006468">
    <property type="protein sequence ID" value="AAL20307.1"/>
    <property type="molecule type" value="Genomic_DNA"/>
</dbReference>
<dbReference type="RefSeq" id="NP_460348.1">
    <property type="nucleotide sequence ID" value="NC_003197.2"/>
</dbReference>
<dbReference type="RefSeq" id="WP_000002375.1">
    <property type="nucleotide sequence ID" value="NC_003197.2"/>
</dbReference>
<dbReference type="STRING" id="99287.STM1383"/>
<dbReference type="PaxDb" id="99287-STM1383"/>
<dbReference type="GeneID" id="1252901"/>
<dbReference type="KEGG" id="stm:STM1383"/>
<dbReference type="PATRIC" id="fig|99287.12.peg.1466"/>
<dbReference type="HOGENOM" id="CLU_008235_0_0_6"/>
<dbReference type="OMA" id="ERYSGCP"/>
<dbReference type="PhylomeDB" id="Q9Z4S6"/>
<dbReference type="BioCyc" id="MetaCyc:MONOMER-12549"/>
<dbReference type="BioCyc" id="SENT99287:STM1383-MONOMER"/>
<dbReference type="Proteomes" id="UP000001014">
    <property type="component" value="Chromosome"/>
</dbReference>
<dbReference type="GO" id="GO:0042597">
    <property type="term" value="C:periplasmic space"/>
    <property type="evidence" value="ECO:0007669"/>
    <property type="project" value="UniProtKB-SubCell"/>
</dbReference>
<dbReference type="GO" id="GO:0005886">
    <property type="term" value="C:plasma membrane"/>
    <property type="evidence" value="ECO:0007669"/>
    <property type="project" value="UniProtKB-SubCell"/>
</dbReference>
<dbReference type="GO" id="GO:0051539">
    <property type="term" value="F:4 iron, 4 sulfur cluster binding"/>
    <property type="evidence" value="ECO:0007669"/>
    <property type="project" value="UniProtKB-KW"/>
</dbReference>
<dbReference type="GO" id="GO:0046872">
    <property type="term" value="F:metal ion binding"/>
    <property type="evidence" value="ECO:0007669"/>
    <property type="project" value="UniProtKB-KW"/>
</dbReference>
<dbReference type="GO" id="GO:0043546">
    <property type="term" value="F:molybdopterin cofactor binding"/>
    <property type="evidence" value="ECO:0007669"/>
    <property type="project" value="InterPro"/>
</dbReference>
<dbReference type="GO" id="GO:0016491">
    <property type="term" value="F:oxidoreductase activity"/>
    <property type="evidence" value="ECO:0007669"/>
    <property type="project" value="UniProtKB-KW"/>
</dbReference>
<dbReference type="CDD" id="cd02780">
    <property type="entry name" value="MopB_CT_Tetrathionate_Arsenate-R"/>
    <property type="match status" value="1"/>
</dbReference>
<dbReference type="CDD" id="cd02758">
    <property type="entry name" value="MopB_Tetrathionate-Ra"/>
    <property type="match status" value="1"/>
</dbReference>
<dbReference type="FunFam" id="3.40.228.10:FF:000010">
    <property type="entry name" value="Tetrathionate reductase subunit A"/>
    <property type="match status" value="1"/>
</dbReference>
<dbReference type="Gene3D" id="2.40.40.20">
    <property type="match status" value="1"/>
</dbReference>
<dbReference type="Gene3D" id="3.40.50.740">
    <property type="match status" value="2"/>
</dbReference>
<dbReference type="Gene3D" id="2.20.25.90">
    <property type="entry name" value="ADC-like domains"/>
    <property type="match status" value="1"/>
</dbReference>
<dbReference type="Gene3D" id="3.40.228.10">
    <property type="entry name" value="Dimethylsulfoxide Reductase, domain 2"/>
    <property type="match status" value="1"/>
</dbReference>
<dbReference type="InterPro" id="IPR009010">
    <property type="entry name" value="Asp_de-COase-like_dom_sf"/>
</dbReference>
<dbReference type="InterPro" id="IPR037946">
    <property type="entry name" value="MopB_CT_Tetrathionate"/>
</dbReference>
<dbReference type="InterPro" id="IPR006657">
    <property type="entry name" value="MoPterin_dinucl-bd_dom"/>
</dbReference>
<dbReference type="InterPro" id="IPR006656">
    <property type="entry name" value="Mopterin_OxRdtase"/>
</dbReference>
<dbReference type="InterPro" id="IPR006963">
    <property type="entry name" value="Mopterin_OxRdtase_4Fe-4S_dom"/>
</dbReference>
<dbReference type="InterPro" id="IPR050612">
    <property type="entry name" value="Prok_Mopterin_Oxidored"/>
</dbReference>
<dbReference type="InterPro" id="IPR041929">
    <property type="entry name" value="Tetrathionate-R_A_N"/>
</dbReference>
<dbReference type="NCBIfam" id="NF011567">
    <property type="entry name" value="PRK14991.1"/>
    <property type="match status" value="1"/>
</dbReference>
<dbReference type="PANTHER" id="PTHR43742:SF9">
    <property type="entry name" value="TETRATHIONATE REDUCTASE SUBUNIT A"/>
    <property type="match status" value="1"/>
</dbReference>
<dbReference type="PANTHER" id="PTHR43742">
    <property type="entry name" value="TRIMETHYLAMINE-N-OXIDE REDUCTASE"/>
    <property type="match status" value="1"/>
</dbReference>
<dbReference type="Pfam" id="PF04879">
    <property type="entry name" value="Molybdop_Fe4S4"/>
    <property type="match status" value="1"/>
</dbReference>
<dbReference type="Pfam" id="PF00384">
    <property type="entry name" value="Molybdopterin"/>
    <property type="match status" value="1"/>
</dbReference>
<dbReference type="Pfam" id="PF01568">
    <property type="entry name" value="Molydop_binding"/>
    <property type="match status" value="1"/>
</dbReference>
<dbReference type="SMART" id="SM00926">
    <property type="entry name" value="Molybdop_Fe4S4"/>
    <property type="match status" value="1"/>
</dbReference>
<dbReference type="SUPFAM" id="SSF50692">
    <property type="entry name" value="ADC-like"/>
    <property type="match status" value="1"/>
</dbReference>
<dbReference type="SUPFAM" id="SSF53706">
    <property type="entry name" value="Formate dehydrogenase/DMSO reductase, domains 1-3"/>
    <property type="match status" value="1"/>
</dbReference>
<dbReference type="PROSITE" id="PS51669">
    <property type="entry name" value="4FE4S_MOW_BIS_MGD"/>
    <property type="match status" value="1"/>
</dbReference>
<comment type="function">
    <text evidence="4 6">Part of a membrane-bound tetrathionate reductase that catalyzes the reduction of tetrathionate to thiosulfate. TtrA is the catalytic subunit. During mice infection, the ability to use tetrathionate as an electron acceptor is a growth advantage for S.typhimurium over the competing microbiota in the lumen of the inflamed gut.</text>
</comment>
<comment type="cofactor">
    <cofactor evidence="7">
        <name>[4Fe-4S] cluster</name>
        <dbReference type="ChEBI" id="CHEBI:49883"/>
    </cofactor>
    <text evidence="7">Binds 1 [4Fe-4S] cluster.</text>
</comment>
<comment type="cofactor">
    <cofactor evidence="1">
        <name>Mo-bis(molybdopterin guanine dinucleotide)</name>
        <dbReference type="ChEBI" id="CHEBI:60539"/>
    </cofactor>
    <text evidence="1">Binds 1 molybdenum-bis(molybdopterin guanine dinucleotide) (Mo-bis-MGD) cofactor per subunit.</text>
</comment>
<comment type="subunit">
    <text evidence="4">Probably composed of three subunits: TtrA, TtrB and TtrC.</text>
</comment>
<comment type="subcellular location">
    <subcellularLocation>
        <location evidence="4">Periplasm</location>
    </subcellularLocation>
    <subcellularLocation>
        <location evidence="8">Cell inner membrane</location>
        <topology evidence="8">Peripheral membrane protein</topology>
        <orientation evidence="8">Periplasmic side</orientation>
    </subcellularLocation>
</comment>
<comment type="induction">
    <text evidence="4 5">Transcriptionally regulated by Fnr and by the TtrR/TtrS two-component regulatory system.</text>
</comment>
<comment type="PTM">
    <text>Predicted to be exported by the Tat system. The position of the signal peptide cleavage has not been experimentally proven.</text>
</comment>
<comment type="disruption phenotype">
    <text evidence="4">Mutants are defective in tetrathionate respiration.</text>
</comment>
<comment type="similarity">
    <text evidence="7">Belongs to the prokaryotic molybdopterin-containing oxidoreductase family.</text>
</comment>
<accession>Q9Z4S6</accession>
<accession>Q7BK17</accession>
<accession>Q7CQN1</accession>
<sequence>MANLTRRQWLKVGLAVGGMVTFGLSYRDVAKRAIDGLLNGTSGKVTRDRIFGNALIPEAQAQTHWQQNPQQTIAMTQCFGCWTQCGIRARVNADGKVIRIAGNPYHPLSQEHPIDSSVPFSEAMEQLAGESGLDARSTACARGATLLESLYSPLRLLEPMKRVGKRGEGKWQRISFEQLIEEVVEGGDLFGEGHVDGLRAIHAPDTPIDAKHPSFGPKTNQLLVTNTSDEGRDAFLRRFALNSFGSKNFGAHGAYCGLAYRAGSGALMGDLDKNPHVKPDWENVEFALFMGTSPAQSGNPFKRQARQLASARLRENFQYVVVAPALPLSTVLADPRGRWQPVMPGSDSALAMGMIRWIMDNQRYNADYLAIPGVQAMQQAGEQSWTNATHLVIADELPTLAGQHLTLRHLTPDGEETPVVLNTDGELVDASTCRQARLFVTQYVTLADGQRVTVKSGLQRLKEAAEKLSLAQYSEQCGVPEAQIIALAETFTSHGRKAAVISHGGMMAGNGFYNAWSVMMLNALIGNLSLSGGVFVGGGKFNGVSDGPRYNMNSFAGKVKPSGLSIARSKTAYEASEEYRDKIAGGQSPYPAKAPWYPFVAGQLTELLTSALEGYPYPLKAWISNMSNPFYGVPGLRAVAEEKLKDPRRLPLFIAIDAFMNETTALADYIVPDTHNFESWGFTAPWGGVASKATTARWPVVAPATHRTADGQPVSMEAFCIAVAKRLHLPGFGDRAITDPQGNTFPLNRAEDFYLRVAANIAFMGKTPVALANQEDISLTGVSRILPAIQHTLKADEVGRVAFIYSRGGRFAPEDSGYTEQRLGNAWKKPLQIWNADVAAHRHAITGERFSGCPVWYPARLSDGRAIDDQFPIGQWPLKLISFKSNTMSSSTAVIPRLHHVKPANLVALNPQDGERYGLQHGDRVRIITPGGQVVAQISLLNGVMPGVIAIEHGYGHREMGATQHSLDGVPMPYDPQIRAGINLNDLGFADPTRTITNTWLDWVSGAAVRQGLPAKIERI</sequence>
<keyword id="KW-0004">4Fe-4S</keyword>
<keyword id="KW-0997">Cell inner membrane</keyword>
<keyword id="KW-1003">Cell membrane</keyword>
<keyword id="KW-0408">Iron</keyword>
<keyword id="KW-0411">Iron-sulfur</keyword>
<keyword id="KW-0472">Membrane</keyword>
<keyword id="KW-0479">Metal-binding</keyword>
<keyword id="KW-0500">Molybdenum</keyword>
<keyword id="KW-0560">Oxidoreductase</keyword>
<keyword id="KW-0574">Periplasm</keyword>
<keyword id="KW-1185">Reference proteome</keyword>
<keyword id="KW-0732">Signal</keyword>
<gene>
    <name type="primary">ttrA</name>
    <name type="ordered locus">STM1383</name>
</gene>
<evidence type="ECO:0000250" key="1"/>
<evidence type="ECO:0000255" key="2"/>
<evidence type="ECO:0000255" key="3">
    <source>
        <dbReference type="PROSITE-ProRule" id="PRU01004"/>
    </source>
</evidence>
<evidence type="ECO:0000269" key="4">
    <source>
    </source>
</evidence>
<evidence type="ECO:0000269" key="5">
    <source>
    </source>
</evidence>
<evidence type="ECO:0000269" key="6">
    <source>
    </source>
</evidence>
<evidence type="ECO:0000305" key="7"/>
<evidence type="ECO:0000305" key="8">
    <source>
    </source>
</evidence>
<feature type="signal peptide" description="Tat-type signal" evidence="2">
    <location>
        <begin position="1"/>
        <end position="33"/>
    </location>
</feature>
<feature type="chain" id="PRO_0000417416" description="Tetrathionate reductase subunit A">
    <location>
        <begin position="34"/>
        <end position="1020"/>
    </location>
</feature>
<feature type="domain" description="4Fe-4S Mo/W bis-MGD-type" evidence="3">
    <location>
        <begin position="71"/>
        <end position="154"/>
    </location>
</feature>
<feature type="binding site" evidence="3">
    <location>
        <position position="78"/>
    </location>
    <ligand>
        <name>[4Fe-4S] cluster</name>
        <dbReference type="ChEBI" id="CHEBI:49883"/>
    </ligand>
</feature>
<feature type="binding site" evidence="3">
    <location>
        <position position="81"/>
    </location>
    <ligand>
        <name>[4Fe-4S] cluster</name>
        <dbReference type="ChEBI" id="CHEBI:49883"/>
    </ligand>
</feature>
<feature type="binding site" evidence="3">
    <location>
        <position position="85"/>
    </location>
    <ligand>
        <name>[4Fe-4S] cluster</name>
        <dbReference type="ChEBI" id="CHEBI:49883"/>
    </ligand>
</feature>
<feature type="binding site" evidence="3">
    <location>
        <position position="140"/>
    </location>
    <ligand>
        <name>[4Fe-4S] cluster</name>
        <dbReference type="ChEBI" id="CHEBI:49883"/>
    </ligand>
</feature>